<feature type="signal peptide" evidence="2">
    <location>
        <begin position="1"/>
        <end position="23"/>
    </location>
</feature>
<feature type="chain" id="PRO_0000355267" description="Snaclec 1">
    <location>
        <begin position="24"/>
        <end position="148"/>
    </location>
</feature>
<feature type="domain" description="C-type lectin" evidence="3">
    <location>
        <begin position="34"/>
        <end position="145"/>
    </location>
</feature>
<feature type="disulfide bond" evidence="3">
    <location>
        <begin position="27"/>
        <end position="38"/>
    </location>
</feature>
<feature type="disulfide bond" evidence="3">
    <location>
        <begin position="55"/>
        <end position="144"/>
    </location>
</feature>
<feature type="disulfide bond" description="Interchain" evidence="3">
    <location>
        <position position="100"/>
    </location>
</feature>
<feature type="disulfide bond" evidence="3">
    <location>
        <begin position="121"/>
        <end position="136"/>
    </location>
</feature>
<keyword id="KW-1015">Disulfide bond</keyword>
<keyword id="KW-1199">Hemostasis impairing toxin</keyword>
<keyword id="KW-0964">Secreted</keyword>
<keyword id="KW-0732">Signal</keyword>
<keyword id="KW-0800">Toxin</keyword>
<organism>
    <name type="scientific">Echis carinatus sochureki</name>
    <name type="common">Saw-scaled viper</name>
    <dbReference type="NCBI Taxonomy" id="124223"/>
    <lineage>
        <taxon>Eukaryota</taxon>
        <taxon>Metazoa</taxon>
        <taxon>Chordata</taxon>
        <taxon>Craniata</taxon>
        <taxon>Vertebrata</taxon>
        <taxon>Euteleostomi</taxon>
        <taxon>Lepidosauria</taxon>
        <taxon>Squamata</taxon>
        <taxon>Bifurcata</taxon>
        <taxon>Unidentata</taxon>
        <taxon>Episquamata</taxon>
        <taxon>Toxicofera</taxon>
        <taxon>Serpentes</taxon>
        <taxon>Colubroidea</taxon>
        <taxon>Viperidae</taxon>
        <taxon>Viperinae</taxon>
        <taxon>Echis</taxon>
    </lineage>
</organism>
<evidence type="ECO:0000250" key="1"/>
<evidence type="ECO:0000255" key="2"/>
<evidence type="ECO:0000255" key="3">
    <source>
        <dbReference type="PROSITE-ProRule" id="PRU00040"/>
    </source>
</evidence>
<evidence type="ECO:0000305" key="4"/>
<comment type="function">
    <text evidence="1">Interferes with one step of hemostasis (modulation of platelet aggregation, or coagulation cascade, for example).</text>
</comment>
<comment type="subunit">
    <text evidence="1">Heterodimer; disulfide-linked.</text>
</comment>
<comment type="subcellular location">
    <subcellularLocation>
        <location evidence="1">Secreted</location>
    </subcellularLocation>
</comment>
<comment type="tissue specificity">
    <text>Expressed by the venom gland.</text>
</comment>
<comment type="miscellaneous">
    <text>Shows greater sequence similarity to the beta than alpha subunits compared to other heterodimer snaclecs.</text>
</comment>
<comment type="similarity">
    <text evidence="4">Belongs to the snaclec family.</text>
</comment>
<accession>Q6X5S9</accession>
<reference key="1">
    <citation type="journal article" date="2003" name="Gene">
        <title>Novel sequences encoding venom C-type lectins are conserved in phylogenetically and geographically distinct Echis and Bitis viper species.</title>
        <authorList>
            <person name="Harrison R.A."/>
            <person name="Oliver J."/>
            <person name="Hasson S.S."/>
            <person name="Bharati K."/>
            <person name="Theakston R.D.G."/>
        </authorList>
    </citation>
    <scope>NUCLEOTIDE SEQUENCE [MRNA]</scope>
    <source>
        <tissue>Venom gland</tissue>
    </source>
</reference>
<dbReference type="EMBL" id="AY254331">
    <property type="protein sequence ID" value="AAQ01212.1"/>
    <property type="molecule type" value="mRNA"/>
</dbReference>
<dbReference type="SMR" id="Q6X5S9"/>
<dbReference type="GO" id="GO:0005576">
    <property type="term" value="C:extracellular region"/>
    <property type="evidence" value="ECO:0007669"/>
    <property type="project" value="UniProtKB-SubCell"/>
</dbReference>
<dbReference type="GO" id="GO:0090729">
    <property type="term" value="F:toxin activity"/>
    <property type="evidence" value="ECO:0007669"/>
    <property type="project" value="UniProtKB-KW"/>
</dbReference>
<dbReference type="FunFam" id="3.10.100.10:FF:000087">
    <property type="entry name" value="Snaclec rhodocetin subunit delta"/>
    <property type="match status" value="1"/>
</dbReference>
<dbReference type="Gene3D" id="3.10.100.10">
    <property type="entry name" value="Mannose-Binding Protein A, subunit A"/>
    <property type="match status" value="1"/>
</dbReference>
<dbReference type="InterPro" id="IPR001304">
    <property type="entry name" value="C-type_lectin-like"/>
</dbReference>
<dbReference type="InterPro" id="IPR016186">
    <property type="entry name" value="C-type_lectin-like/link_sf"/>
</dbReference>
<dbReference type="InterPro" id="IPR050111">
    <property type="entry name" value="C-type_lectin/snaclec_domain"/>
</dbReference>
<dbReference type="InterPro" id="IPR018378">
    <property type="entry name" value="C-type_lectin_CS"/>
</dbReference>
<dbReference type="InterPro" id="IPR016187">
    <property type="entry name" value="CTDL_fold"/>
</dbReference>
<dbReference type="PANTHER" id="PTHR22803">
    <property type="entry name" value="MANNOSE, PHOSPHOLIPASE, LECTIN RECEPTOR RELATED"/>
    <property type="match status" value="1"/>
</dbReference>
<dbReference type="Pfam" id="PF00059">
    <property type="entry name" value="Lectin_C"/>
    <property type="match status" value="1"/>
</dbReference>
<dbReference type="PRINTS" id="PR01504">
    <property type="entry name" value="PNCREATITSAP"/>
</dbReference>
<dbReference type="SMART" id="SM00034">
    <property type="entry name" value="CLECT"/>
    <property type="match status" value="1"/>
</dbReference>
<dbReference type="SUPFAM" id="SSF56436">
    <property type="entry name" value="C-type lectin-like"/>
    <property type="match status" value="1"/>
</dbReference>
<dbReference type="PROSITE" id="PS00615">
    <property type="entry name" value="C_TYPE_LECTIN_1"/>
    <property type="match status" value="1"/>
</dbReference>
<dbReference type="PROSITE" id="PS50041">
    <property type="entry name" value="C_TYPE_LECTIN_2"/>
    <property type="match status" value="1"/>
</dbReference>
<name>SL1_ECHCS</name>
<sequence length="148" mass="16673">MGRFIFVSFGLLVVFLSLSGTEAGVCCPLGWSGYDQNCYKAFEELMNWADAEKFCTQQHKGSHLVSLHNIAEADFVVKKIVSVLKDGVIWMGLNDVWNECNWGWTDGAQLDYKAWNVESNCFIFKTAENHWSRTDCSGTHSFVCKSPA</sequence>
<protein>
    <recommendedName>
        <fullName>Snaclec 1</fullName>
    </recommendedName>
    <alternativeName>
        <fullName>C-type lectin 1</fullName>
        <shortName>CTL-1</shortName>
    </alternativeName>
</protein>
<proteinExistence type="evidence at transcript level"/>